<keyword id="KW-0002">3D-structure</keyword>
<keyword id="KW-0007">Acetylation</keyword>
<keyword id="KW-0051">Antiviral defense</keyword>
<keyword id="KW-0053">Apoptosis</keyword>
<keyword id="KW-0072">Autophagy</keyword>
<keyword id="KW-0131">Cell cycle</keyword>
<keyword id="KW-0132">Cell division</keyword>
<keyword id="KW-0175">Coiled coil</keyword>
<keyword id="KW-0963">Cytoplasm</keyword>
<keyword id="KW-0968">Cytoplasmic vesicle</keyword>
<keyword id="KW-0256">Endoplasmic reticulum</keyword>
<keyword id="KW-0967">Endosome</keyword>
<keyword id="KW-0333">Golgi apparatus</keyword>
<keyword id="KW-1017">Isopeptide bond</keyword>
<keyword id="KW-0472">Membrane</keyword>
<keyword id="KW-0496">Mitochondrion</keyword>
<keyword id="KW-0539">Nucleus</keyword>
<keyword id="KW-0597">Phosphoprotein</keyword>
<keyword id="KW-1185">Reference proteome</keyword>
<keyword id="KW-0832">Ubl conjugation</keyword>
<proteinExistence type="evidence at protein level"/>
<sequence length="448" mass="51557">MEGSKASSSTMQVSFVCQRCSQPLKLDTSFKILDRVTIQELTAPLLTTAQAKPGESQEEEANSGEEPFIETRQDGVSRRFIPPARMMSTESANSFTLIGEASDGGTMENLSRRLKVTGDLFDIMSGQTDVDHPLCEECTDTLLDQLDTQLNVTENECQNYKRCLEMLEQMNEGDSEQLQRELKELALEEERLIQELEDVEKNRKVVAENLEKVQAEAERLDQEEAQYQREYSEFKRQQLELDDELKSVENQMRYAQMQLDKLKKTNVFNATFHIWHSGQFGTINNFRLGRLPSAPVEWNEINAAWGQTVLLLHALANKMGLKFQRYRLVPYGNHSYLESLTDKSKELPLYCSGGLRFFWDNKFDHAMVAFLDCVQQFKEEVEKGETRFCLPYRMDVEKGKIEDTGGSGGSYSIKTQFNSEEQWTKALKFMLTNLKWGLAWVSSQFYNK</sequence>
<protein>
    <recommendedName>
        <fullName>Beclin-1</fullName>
    </recommendedName>
    <alternativeName>
        <fullName>Coiled-coil myosin-like BCL2-interacting protein</fullName>
    </alternativeName>
    <alternativeName>
        <fullName>Protein GT197</fullName>
    </alternativeName>
    <component>
        <recommendedName>
            <fullName>Beclin-1-C 35 kDa</fullName>
        </recommendedName>
    </component>
    <component>
        <recommendedName>
            <fullName>Beclin-1-C 37 kDa</fullName>
        </recommendedName>
    </component>
</protein>
<accession>Q91XJ1</accession>
<gene>
    <name type="primary">Becn1</name>
</gene>
<dbReference type="EMBL" id="AY033824">
    <property type="protein sequence ID" value="AAK56548.1"/>
    <property type="molecule type" value="mRNA"/>
</dbReference>
<dbReference type="EMBL" id="BC074011">
    <property type="protein sequence ID" value="AAH74011.1"/>
    <property type="molecule type" value="mRNA"/>
</dbReference>
<dbReference type="RefSeq" id="NP_001029289.1">
    <property type="nucleotide sequence ID" value="NM_001034117.1"/>
</dbReference>
<dbReference type="RefSeq" id="NP_446191.1">
    <property type="nucleotide sequence ID" value="NM_053739.2"/>
</dbReference>
<dbReference type="PDB" id="3Q8T">
    <property type="method" value="X-ray"/>
    <property type="resolution" value="1.90 A"/>
    <property type="chains" value="A/B=174-264"/>
</dbReference>
<dbReference type="PDBsum" id="3Q8T"/>
<dbReference type="SMR" id="Q91XJ1"/>
<dbReference type="BioGRID" id="250376">
    <property type="interactions" value="2"/>
</dbReference>
<dbReference type="DIP" id="DIP-61888N"/>
<dbReference type="FunCoup" id="Q91XJ1">
    <property type="interactions" value="3542"/>
</dbReference>
<dbReference type="IntAct" id="Q91XJ1">
    <property type="interactions" value="1"/>
</dbReference>
<dbReference type="STRING" id="10116.ENSRNOP00000071966"/>
<dbReference type="iPTMnet" id="Q91XJ1"/>
<dbReference type="PhosphoSitePlus" id="Q91XJ1"/>
<dbReference type="PaxDb" id="10116-ENSRNOP00000027868"/>
<dbReference type="Ensembl" id="ENSRNOT00000082010.2">
    <property type="protein sequence ID" value="ENSRNOP00000071966.1"/>
    <property type="gene ID" value="ENSRNOG00000020513.8"/>
</dbReference>
<dbReference type="GeneID" id="114558"/>
<dbReference type="KEGG" id="rno:114558"/>
<dbReference type="UCSC" id="RGD:620190">
    <property type="organism name" value="rat"/>
</dbReference>
<dbReference type="AGR" id="RGD:620190"/>
<dbReference type="CTD" id="8678"/>
<dbReference type="RGD" id="620190">
    <property type="gene designation" value="Becn1"/>
</dbReference>
<dbReference type="eggNOG" id="KOG2751">
    <property type="taxonomic scope" value="Eukaryota"/>
</dbReference>
<dbReference type="GeneTree" id="ENSGT00390000008164"/>
<dbReference type="HOGENOM" id="CLU_024219_4_1_1"/>
<dbReference type="InParanoid" id="Q91XJ1"/>
<dbReference type="OMA" id="EWDVYKA"/>
<dbReference type="OrthoDB" id="20368at2759"/>
<dbReference type="PhylomeDB" id="Q91XJ1"/>
<dbReference type="TreeFam" id="TF314282"/>
<dbReference type="Reactome" id="R-RNO-1169408">
    <property type="pathway name" value="ISG15 antiviral mechanism"/>
</dbReference>
<dbReference type="Reactome" id="R-RNO-1632852">
    <property type="pathway name" value="Macroautophagy"/>
</dbReference>
<dbReference type="Reactome" id="R-RNO-5689880">
    <property type="pathway name" value="Ub-specific processing proteases"/>
</dbReference>
<dbReference type="EvolutionaryTrace" id="Q91XJ1"/>
<dbReference type="PRO" id="PR:Q91XJ1"/>
<dbReference type="Proteomes" id="UP000002494">
    <property type="component" value="Chromosome 10"/>
</dbReference>
<dbReference type="Bgee" id="ENSRNOG00000020513">
    <property type="expression patterns" value="Expressed in colon and 20 other cell types or tissues"/>
</dbReference>
<dbReference type="GO" id="GO:0005776">
    <property type="term" value="C:autophagosome"/>
    <property type="evidence" value="ECO:0000266"/>
    <property type="project" value="RGD"/>
</dbReference>
<dbReference type="GO" id="GO:0005737">
    <property type="term" value="C:cytoplasm"/>
    <property type="evidence" value="ECO:0000266"/>
    <property type="project" value="RGD"/>
</dbReference>
<dbReference type="GO" id="GO:0032473">
    <property type="term" value="C:cytoplasmic side of mitochondrial outer membrane"/>
    <property type="evidence" value="ECO:0000266"/>
    <property type="project" value="RGD"/>
</dbReference>
<dbReference type="GO" id="GO:0031410">
    <property type="term" value="C:cytoplasmic vesicle"/>
    <property type="evidence" value="ECO:0000266"/>
    <property type="project" value="RGD"/>
</dbReference>
<dbReference type="GO" id="GO:0005829">
    <property type="term" value="C:cytosol"/>
    <property type="evidence" value="ECO:0007669"/>
    <property type="project" value="Ensembl"/>
</dbReference>
<dbReference type="GO" id="GO:0030425">
    <property type="term" value="C:dendrite"/>
    <property type="evidence" value="ECO:0000314"/>
    <property type="project" value="RGD"/>
</dbReference>
<dbReference type="GO" id="GO:0005783">
    <property type="term" value="C:endoplasmic reticulum"/>
    <property type="evidence" value="ECO:0000266"/>
    <property type="project" value="RGD"/>
</dbReference>
<dbReference type="GO" id="GO:0005789">
    <property type="term" value="C:endoplasmic reticulum membrane"/>
    <property type="evidence" value="ECO:0007669"/>
    <property type="project" value="UniProtKB-SubCell"/>
</dbReference>
<dbReference type="GO" id="GO:0005768">
    <property type="term" value="C:endosome"/>
    <property type="evidence" value="ECO:0000266"/>
    <property type="project" value="RGD"/>
</dbReference>
<dbReference type="GO" id="GO:0010008">
    <property type="term" value="C:endosome membrane"/>
    <property type="evidence" value="ECO:0007669"/>
    <property type="project" value="UniProtKB-SubCell"/>
</dbReference>
<dbReference type="GO" id="GO:0005739">
    <property type="term" value="C:mitochondrion"/>
    <property type="evidence" value="ECO:0000266"/>
    <property type="project" value="RGD"/>
</dbReference>
<dbReference type="GO" id="GO:0016604">
    <property type="term" value="C:nuclear body"/>
    <property type="evidence" value="ECO:0007669"/>
    <property type="project" value="Ensembl"/>
</dbReference>
<dbReference type="GO" id="GO:0045335">
    <property type="term" value="C:phagocytic vesicle"/>
    <property type="evidence" value="ECO:0000266"/>
    <property type="project" value="RGD"/>
</dbReference>
<dbReference type="GO" id="GO:0000407">
    <property type="term" value="C:phagophore assembly site"/>
    <property type="evidence" value="ECO:0000318"/>
    <property type="project" value="GO_Central"/>
</dbReference>
<dbReference type="GO" id="GO:0035032">
    <property type="term" value="C:phosphatidylinositol 3-kinase complex, class III"/>
    <property type="evidence" value="ECO:0000250"/>
    <property type="project" value="UniProtKB"/>
</dbReference>
<dbReference type="GO" id="GO:0034271">
    <property type="term" value="C:phosphatidylinositol 3-kinase complex, class III, type I"/>
    <property type="evidence" value="ECO:0000318"/>
    <property type="project" value="GO_Central"/>
</dbReference>
<dbReference type="GO" id="GO:0034272">
    <property type="term" value="C:phosphatidylinositol 3-kinase complex, class III, type II"/>
    <property type="evidence" value="ECO:0000318"/>
    <property type="project" value="GO_Central"/>
</dbReference>
<dbReference type="GO" id="GO:0032991">
    <property type="term" value="C:protein-containing complex"/>
    <property type="evidence" value="ECO:0000266"/>
    <property type="project" value="RGD"/>
</dbReference>
<dbReference type="GO" id="GO:0005802">
    <property type="term" value="C:trans-Golgi network"/>
    <property type="evidence" value="ECO:0000314"/>
    <property type="project" value="RGD"/>
</dbReference>
<dbReference type="GO" id="GO:0051020">
    <property type="term" value="F:GTPase binding"/>
    <property type="evidence" value="ECO:0000266"/>
    <property type="project" value="RGD"/>
</dbReference>
<dbReference type="GO" id="GO:0042802">
    <property type="term" value="F:identical protein binding"/>
    <property type="evidence" value="ECO:0000266"/>
    <property type="project" value="RGD"/>
</dbReference>
<dbReference type="GO" id="GO:0060090">
    <property type="term" value="F:molecular adaptor activity"/>
    <property type="evidence" value="ECO:0000266"/>
    <property type="project" value="RGD"/>
</dbReference>
<dbReference type="GO" id="GO:0043548">
    <property type="term" value="F:phosphatidylinositol 3-kinase binding"/>
    <property type="evidence" value="ECO:0000266"/>
    <property type="project" value="RGD"/>
</dbReference>
<dbReference type="GO" id="GO:0019901">
    <property type="term" value="F:protein kinase binding"/>
    <property type="evidence" value="ECO:0000266"/>
    <property type="project" value="RGD"/>
</dbReference>
<dbReference type="GO" id="GO:0030674">
    <property type="term" value="F:protein-macromolecule adaptor activity"/>
    <property type="evidence" value="ECO:0000266"/>
    <property type="project" value="RGD"/>
</dbReference>
<dbReference type="GO" id="GO:0031625">
    <property type="term" value="F:ubiquitin protein ligase binding"/>
    <property type="evidence" value="ECO:0000353"/>
    <property type="project" value="RGD"/>
</dbReference>
<dbReference type="GO" id="GO:0050435">
    <property type="term" value="P:amyloid-beta metabolic process"/>
    <property type="evidence" value="ECO:0000266"/>
    <property type="project" value="RGD"/>
</dbReference>
<dbReference type="GO" id="GO:0006915">
    <property type="term" value="P:apoptotic process"/>
    <property type="evidence" value="ECO:0007669"/>
    <property type="project" value="UniProtKB-KW"/>
</dbReference>
<dbReference type="GO" id="GO:0000045">
    <property type="term" value="P:autophagosome assembly"/>
    <property type="evidence" value="ECO:0000315"/>
    <property type="project" value="RGD"/>
</dbReference>
<dbReference type="GO" id="GO:0097352">
    <property type="term" value="P:autophagosome maturation"/>
    <property type="evidence" value="ECO:0000266"/>
    <property type="project" value="RGD"/>
</dbReference>
<dbReference type="GO" id="GO:0006914">
    <property type="term" value="P:autophagy"/>
    <property type="evidence" value="ECO:0000315"/>
    <property type="project" value="RGD"/>
</dbReference>
<dbReference type="GO" id="GO:0051301">
    <property type="term" value="P:cell division"/>
    <property type="evidence" value="ECO:0007669"/>
    <property type="project" value="UniProtKB-KW"/>
</dbReference>
<dbReference type="GO" id="GO:0071275">
    <property type="term" value="P:cellular response to aluminum ion"/>
    <property type="evidence" value="ECO:0000270"/>
    <property type="project" value="RGD"/>
</dbReference>
<dbReference type="GO" id="GO:0034198">
    <property type="term" value="P:cellular response to amino acid starvation"/>
    <property type="evidence" value="ECO:0000270"/>
    <property type="project" value="RGD"/>
</dbReference>
<dbReference type="GO" id="GO:0071280">
    <property type="term" value="P:cellular response to copper ion"/>
    <property type="evidence" value="ECO:0000270"/>
    <property type="project" value="RGD"/>
</dbReference>
<dbReference type="GO" id="GO:0071364">
    <property type="term" value="P:cellular response to epidermal growth factor stimulus"/>
    <property type="evidence" value="ECO:0000270"/>
    <property type="project" value="RGD"/>
</dbReference>
<dbReference type="GO" id="GO:0042149">
    <property type="term" value="P:cellular response to glucose starvation"/>
    <property type="evidence" value="ECO:0000250"/>
    <property type="project" value="UniProtKB"/>
</dbReference>
<dbReference type="GO" id="GO:0070301">
    <property type="term" value="P:cellular response to hydrogen peroxide"/>
    <property type="evidence" value="ECO:0000270"/>
    <property type="project" value="RGD"/>
</dbReference>
<dbReference type="GO" id="GO:0006995">
    <property type="term" value="P:cellular response to nitrogen starvation"/>
    <property type="evidence" value="ECO:0000318"/>
    <property type="project" value="GO_Central"/>
</dbReference>
<dbReference type="GO" id="GO:0090650">
    <property type="term" value="P:cellular response to oxygen-glucose deprivation"/>
    <property type="evidence" value="ECO:0000270"/>
    <property type="project" value="RGD"/>
</dbReference>
<dbReference type="GO" id="GO:0007623">
    <property type="term" value="P:circadian rhythm"/>
    <property type="evidence" value="ECO:0000270"/>
    <property type="project" value="RGD"/>
</dbReference>
<dbReference type="GO" id="GO:0002753">
    <property type="term" value="P:cytoplasmic pattern recognition receptor signaling pathway"/>
    <property type="evidence" value="ECO:0000266"/>
    <property type="project" value="RGD"/>
</dbReference>
<dbReference type="GO" id="GO:0051607">
    <property type="term" value="P:defense response to virus"/>
    <property type="evidence" value="ECO:0007669"/>
    <property type="project" value="UniProtKB-KW"/>
</dbReference>
<dbReference type="GO" id="GO:0045022">
    <property type="term" value="P:early endosome to late endosome transport"/>
    <property type="evidence" value="ECO:0000250"/>
    <property type="project" value="UniProtKB"/>
</dbReference>
<dbReference type="GO" id="GO:0043652">
    <property type="term" value="P:engulfment of apoptotic cell"/>
    <property type="evidence" value="ECO:0000266"/>
    <property type="project" value="RGD"/>
</dbReference>
<dbReference type="GO" id="GO:0007254">
    <property type="term" value="P:JNK cascade"/>
    <property type="evidence" value="ECO:0000315"/>
    <property type="project" value="RGD"/>
</dbReference>
<dbReference type="GO" id="GO:0045324">
    <property type="term" value="P:late endosome to vacuole transport"/>
    <property type="evidence" value="ECO:0000318"/>
    <property type="project" value="GO_Central"/>
</dbReference>
<dbReference type="GO" id="GO:0007040">
    <property type="term" value="P:lysosome organization"/>
    <property type="evidence" value="ECO:0000266"/>
    <property type="project" value="RGD"/>
</dbReference>
<dbReference type="GO" id="GO:0016236">
    <property type="term" value="P:macroautophagy"/>
    <property type="evidence" value="ECO:0000250"/>
    <property type="project" value="UniProtKB"/>
</dbReference>
<dbReference type="GO" id="GO:0000423">
    <property type="term" value="P:mitophagy"/>
    <property type="evidence" value="ECO:0000266"/>
    <property type="project" value="RGD"/>
</dbReference>
<dbReference type="GO" id="GO:0007080">
    <property type="term" value="P:mitotic metaphase chromosome alignment"/>
    <property type="evidence" value="ECO:0000266"/>
    <property type="project" value="RGD"/>
</dbReference>
<dbReference type="GO" id="GO:0043066">
    <property type="term" value="P:negative regulation of apoptotic process"/>
    <property type="evidence" value="ECO:0000315"/>
    <property type="project" value="RGD"/>
</dbReference>
<dbReference type="GO" id="GO:1902902">
    <property type="term" value="P:negative regulation of autophagosome assembly"/>
    <property type="evidence" value="ECO:0000266"/>
    <property type="project" value="RGD"/>
</dbReference>
<dbReference type="GO" id="GO:0010507">
    <property type="term" value="P:negative regulation of autophagy"/>
    <property type="evidence" value="ECO:0000266"/>
    <property type="project" value="RGD"/>
</dbReference>
<dbReference type="GO" id="GO:0008285">
    <property type="term" value="P:negative regulation of cell population proliferation"/>
    <property type="evidence" value="ECO:0000266"/>
    <property type="project" value="RGD"/>
</dbReference>
<dbReference type="GO" id="GO:1905672">
    <property type="term" value="P:negative regulation of lysosome organization"/>
    <property type="evidence" value="ECO:0000315"/>
    <property type="project" value="RGD"/>
</dbReference>
<dbReference type="GO" id="GO:0043069">
    <property type="term" value="P:negative regulation of programmed cell death"/>
    <property type="evidence" value="ECO:0000266"/>
    <property type="project" value="RGD"/>
</dbReference>
<dbReference type="GO" id="GO:0048666">
    <property type="term" value="P:neuron development"/>
    <property type="evidence" value="ECO:0000266"/>
    <property type="project" value="RGD"/>
</dbReference>
<dbReference type="GO" id="GO:0038066">
    <property type="term" value="P:p38MAPK cascade"/>
    <property type="evidence" value="ECO:0000315"/>
    <property type="project" value="RGD"/>
</dbReference>
<dbReference type="GO" id="GO:0036092">
    <property type="term" value="P:phosphatidylinositol-3-phosphate biosynthetic process"/>
    <property type="evidence" value="ECO:0000266"/>
    <property type="project" value="RGD"/>
</dbReference>
<dbReference type="GO" id="GO:1902425">
    <property type="term" value="P:positive regulation of attachment of mitotic spindle microtubules to kinetochore"/>
    <property type="evidence" value="ECO:0000266"/>
    <property type="project" value="RGD"/>
</dbReference>
<dbReference type="GO" id="GO:2000786">
    <property type="term" value="P:positive regulation of autophagosome assembly"/>
    <property type="evidence" value="ECO:0000315"/>
    <property type="project" value="RGD"/>
</dbReference>
<dbReference type="GO" id="GO:0010508">
    <property type="term" value="P:positive regulation of autophagy"/>
    <property type="evidence" value="ECO:0000315"/>
    <property type="project" value="RGD"/>
</dbReference>
<dbReference type="GO" id="GO:0010613">
    <property type="term" value="P:positive regulation of cardiac muscle hypertrophy"/>
    <property type="evidence" value="ECO:0000266"/>
    <property type="project" value="RGD"/>
</dbReference>
<dbReference type="GO" id="GO:2001244">
    <property type="term" value="P:positive regulation of intrinsic apoptotic signaling pathway"/>
    <property type="evidence" value="ECO:0000315"/>
    <property type="project" value="UniProtKB"/>
</dbReference>
<dbReference type="GO" id="GO:0062029">
    <property type="term" value="P:positive regulation of stress granule assembly"/>
    <property type="evidence" value="ECO:0000315"/>
    <property type="project" value="RGD"/>
</dbReference>
<dbReference type="GO" id="GO:0065003">
    <property type="term" value="P:protein-containing complex assembly"/>
    <property type="evidence" value="ECO:0000266"/>
    <property type="project" value="RGD"/>
</dbReference>
<dbReference type="GO" id="GO:0032801">
    <property type="term" value="P:receptor catabolic process"/>
    <property type="evidence" value="ECO:0000266"/>
    <property type="project" value="RGD"/>
</dbReference>
<dbReference type="GO" id="GO:0010506">
    <property type="term" value="P:regulation of autophagy"/>
    <property type="evidence" value="ECO:0000266"/>
    <property type="project" value="RGD"/>
</dbReference>
<dbReference type="GO" id="GO:0032465">
    <property type="term" value="P:regulation of cytokinesis"/>
    <property type="evidence" value="ECO:0000250"/>
    <property type="project" value="UniProtKB"/>
</dbReference>
<dbReference type="GO" id="GO:0016241">
    <property type="term" value="P:regulation of macroautophagy"/>
    <property type="evidence" value="ECO:0000266"/>
    <property type="project" value="RGD"/>
</dbReference>
<dbReference type="GO" id="GO:0001666">
    <property type="term" value="P:response to hypoxia"/>
    <property type="evidence" value="ECO:0000270"/>
    <property type="project" value="RGD"/>
</dbReference>
<dbReference type="GO" id="GO:0010040">
    <property type="term" value="P:response to iron(II) ion"/>
    <property type="evidence" value="ECO:0000270"/>
    <property type="project" value="RGD"/>
</dbReference>
<dbReference type="GO" id="GO:0010288">
    <property type="term" value="P:response to lead ion"/>
    <property type="evidence" value="ECO:0000270"/>
    <property type="project" value="RGD"/>
</dbReference>
<dbReference type="GO" id="GO:0098780">
    <property type="term" value="P:response to mitochondrial depolarisation"/>
    <property type="evidence" value="ECO:0000266"/>
    <property type="project" value="RGD"/>
</dbReference>
<dbReference type="GO" id="GO:0031667">
    <property type="term" value="P:response to nutrient levels"/>
    <property type="evidence" value="ECO:0000270"/>
    <property type="project" value="RGD"/>
</dbReference>
<dbReference type="GO" id="GO:0051707">
    <property type="term" value="P:response to other organism"/>
    <property type="evidence" value="ECO:0000266"/>
    <property type="project" value="RGD"/>
</dbReference>
<dbReference type="GO" id="GO:0033197">
    <property type="term" value="P:response to vitamin E"/>
    <property type="evidence" value="ECO:0000270"/>
    <property type="project" value="RGD"/>
</dbReference>
<dbReference type="GO" id="GO:0009410">
    <property type="term" value="P:response to xenobiotic stimulus"/>
    <property type="evidence" value="ECO:0000270"/>
    <property type="project" value="RGD"/>
</dbReference>
<dbReference type="GO" id="GO:0060395">
    <property type="term" value="P:SMAD protein signal transduction"/>
    <property type="evidence" value="ECO:0000314"/>
    <property type="project" value="RGD"/>
</dbReference>
<dbReference type="FunFam" id="1.10.418.40:FF:000001">
    <property type="entry name" value="beclin-1 isoform X1"/>
    <property type="match status" value="1"/>
</dbReference>
<dbReference type="Gene3D" id="6.10.250.3110">
    <property type="match status" value="1"/>
</dbReference>
<dbReference type="Gene3D" id="1.10.418.40">
    <property type="entry name" value="Autophagy protein 6/Beclin 1"/>
    <property type="match status" value="1"/>
</dbReference>
<dbReference type="InterPro" id="IPR007243">
    <property type="entry name" value="Atg6/Beclin"/>
</dbReference>
<dbReference type="InterPro" id="IPR038274">
    <property type="entry name" value="Atg6/Beclin_C_sf"/>
</dbReference>
<dbReference type="InterPro" id="IPR041691">
    <property type="entry name" value="Atg6/beclin_CC"/>
</dbReference>
<dbReference type="InterPro" id="IPR040455">
    <property type="entry name" value="Atg6_BARA"/>
</dbReference>
<dbReference type="InterPro" id="IPR029318">
    <property type="entry name" value="BH3_dom"/>
</dbReference>
<dbReference type="PANTHER" id="PTHR12768">
    <property type="entry name" value="BECLIN 1"/>
    <property type="match status" value="1"/>
</dbReference>
<dbReference type="PANTHER" id="PTHR12768:SF6">
    <property type="entry name" value="BECLIN-1"/>
    <property type="match status" value="1"/>
</dbReference>
<dbReference type="Pfam" id="PF04111">
    <property type="entry name" value="APG6"/>
    <property type="match status" value="1"/>
</dbReference>
<dbReference type="Pfam" id="PF17675">
    <property type="entry name" value="APG6_N"/>
    <property type="match status" value="1"/>
</dbReference>
<dbReference type="Pfam" id="PF15285">
    <property type="entry name" value="BH3"/>
    <property type="match status" value="1"/>
</dbReference>
<name>BECN1_RAT</name>
<organism>
    <name type="scientific">Rattus norvegicus</name>
    <name type="common">Rat</name>
    <dbReference type="NCBI Taxonomy" id="10116"/>
    <lineage>
        <taxon>Eukaryota</taxon>
        <taxon>Metazoa</taxon>
        <taxon>Chordata</taxon>
        <taxon>Craniata</taxon>
        <taxon>Vertebrata</taxon>
        <taxon>Euteleostomi</taxon>
        <taxon>Mammalia</taxon>
        <taxon>Eutheria</taxon>
        <taxon>Euarchontoglires</taxon>
        <taxon>Glires</taxon>
        <taxon>Rodentia</taxon>
        <taxon>Myomorpha</taxon>
        <taxon>Muroidea</taxon>
        <taxon>Muridae</taxon>
        <taxon>Murinae</taxon>
        <taxon>Rattus</taxon>
    </lineage>
</organism>
<feature type="chain" id="PRO_0000316290" description="Beclin-1">
    <location>
        <begin position="1"/>
        <end position="448"/>
    </location>
</feature>
<feature type="chain" id="PRO_0000435044" description="Beclin-1-C 37 kDa" evidence="2">
    <location>
        <begin position="132"/>
        <end position="448"/>
    </location>
</feature>
<feature type="chain" id="PRO_0000435045" description="Beclin-1-C 35 kDa" evidence="2">
    <location>
        <begin position="148"/>
        <end position="448"/>
    </location>
</feature>
<feature type="region of interest" description="Disordered" evidence="4">
    <location>
        <begin position="47"/>
        <end position="72"/>
    </location>
</feature>
<feature type="region of interest" description="Interaction with BCL2 and BCL2L1 isoform Bcl-X(L)" evidence="2">
    <location>
        <begin position="110"/>
        <end position="157"/>
    </location>
</feature>
<feature type="region of interest" description="Evolutionary conserved domain (ECD)" evidence="2">
    <location>
        <begin position="243"/>
        <end position="448"/>
    </location>
</feature>
<feature type="region of interest" description="Required for membrane-association" evidence="2">
    <location>
        <begin position="423"/>
        <end position="448"/>
    </location>
</feature>
<feature type="coiled-coil region" evidence="3">
    <location>
        <begin position="140"/>
        <end position="267"/>
    </location>
</feature>
<feature type="short sequence motif" description="BH3" evidence="2">
    <location>
        <begin position="106"/>
        <end position="125"/>
    </location>
</feature>
<feature type="modified residue" description="N-acetylmethionine" evidence="2">
    <location>
        <position position="1"/>
    </location>
</feature>
<feature type="modified residue" description="Phosphoserine" evidence="2">
    <location>
        <position position="14"/>
    </location>
</feature>
<feature type="modified residue" description="Phosphoserine" evidence="2">
    <location>
        <position position="29"/>
    </location>
</feature>
<feature type="modified residue" description="Phosphoserine; by AMPK" evidence="2">
    <location>
        <position position="88"/>
    </location>
</feature>
<feature type="modified residue" description="Phosphoserine; by AMPK" evidence="2">
    <location>
        <position position="91"/>
    </location>
</feature>
<feature type="modified residue" description="Phosphoserine; by AMPK" evidence="1">
    <location>
        <position position="94"/>
    </location>
</feature>
<feature type="modified residue" description="Phosphothreonine; by DAPK1" evidence="2">
    <location>
        <position position="117"/>
    </location>
</feature>
<feature type="cross-link" description="Glycyl lysine isopeptide (Lys-Gly) (interchain with G-Cter in ubiquitin)" evidence="2">
    <location>
        <position position="400"/>
    </location>
</feature>
<feature type="cross-link" description="Glycyl lysine isopeptide (Lys-Gly) (interchain with G-Cter in ubiquitin)" evidence="2">
    <location>
        <position position="435"/>
    </location>
</feature>
<feature type="mutagenesis site" description="Disrupts homodimerization, no effect on interaction with ATG14 and UVRAG; when associated with A-192." evidence="6">
    <original>L</original>
    <variation>A</variation>
    <location>
        <position position="178"/>
    </location>
</feature>
<feature type="mutagenesis site" description="Disrupts homodimerization, no effect on interaction with ATG14 and UVRAG; when associated with A-196." evidence="6">
    <original>L</original>
    <variation>A</variation>
    <location>
        <position position="178"/>
    </location>
</feature>
<feature type="mutagenesis site" description="Disrupts homodimerization, no effect on interaction with ATG14 and UVRAG; when associated with A-259." evidence="6">
    <original>L</original>
    <variation>A</variation>
    <location>
        <position position="178"/>
    </location>
</feature>
<feature type="mutagenesis site" description="Decreases interaction with ATG14, no effect on interaction with UVRAG; when associated with L-217, L-224 and L-255." evidence="6">
    <original>E</original>
    <variation>L</variation>
    <location>
        <position position="189"/>
    </location>
</feature>
<feature type="mutagenesis site" description="Disrupts homodimerization, no effect on interaction with ATG14 and UVRAG; when associated with A-178." evidence="6">
    <original>L</original>
    <variation>A</variation>
    <location>
        <position position="192"/>
    </location>
</feature>
<feature type="mutagenesis site" description="Disrupts homodimerization, no effect on interaction with ATG14 and UVRAG; when associated with A-178." evidence="6">
    <original>L</original>
    <variation>A</variation>
    <location>
        <position position="196"/>
    </location>
</feature>
<feature type="mutagenesis site" description="Decreases interaction with ATG14, no effect on interaction with UVRAG; when associated with L-189, L-224 and L-255." evidence="6">
    <original>A</original>
    <variation>L</variation>
    <location>
        <position position="217"/>
    </location>
</feature>
<feature type="mutagenesis site" description="Decreases interaction with ATG14, no effect on interaction with UVRAG; when associated with L-189, L-217 and L-255." evidence="6">
    <original>E</original>
    <variation>L</variation>
    <location>
        <position position="224"/>
    </location>
</feature>
<feature type="mutagenesis site" description="Decreases interaction with ATG14, no effect on interaction with UVRAG; when associated with L-189, L-217 and L-224." evidence="6">
    <original>A</original>
    <variation>L</variation>
    <location>
        <position position="255"/>
    </location>
</feature>
<feature type="mutagenesis site" description="Disrupts homodimerization, no effect on interaction with ATG14 and UVRAG; when associated with A-178." evidence="6">
    <original>L</original>
    <variation>A</variation>
    <location>
        <position position="259"/>
    </location>
</feature>
<feature type="helix" evidence="8">
    <location>
        <begin position="174"/>
        <end position="263"/>
    </location>
</feature>
<reference key="1">
    <citation type="submission" date="2001-04" db="EMBL/GenBank/DDBJ databases">
        <title>Beclin mRNA in the developing rat ovary.</title>
        <authorList>
            <person name="Paredes A.H."/>
            <person name="Tapia V."/>
            <person name="Ojeda S.R."/>
        </authorList>
    </citation>
    <scope>NUCLEOTIDE SEQUENCE [MRNA]</scope>
    <source>
        <strain>Sprague-Dawley</strain>
        <tissue>Ovary</tissue>
    </source>
</reference>
<reference key="2">
    <citation type="journal article" date="2004" name="Genome Res.">
        <title>The status, quality, and expansion of the NIH full-length cDNA project: the Mammalian Gene Collection (MGC).</title>
        <authorList>
            <consortium name="The MGC Project Team"/>
        </authorList>
    </citation>
    <scope>NUCLEOTIDE SEQUENCE [LARGE SCALE MRNA]</scope>
    <source>
        <tissue>Lung</tissue>
    </source>
</reference>
<reference key="3">
    <citation type="journal article" date="2008" name="Oncogene">
        <title>Reduced expression of vacuole membrane protein 1 affects the invasion capacity of tumor cells.</title>
        <authorList>
            <person name="Sauermann M."/>
            <person name="Sahin O."/>
            <person name="Sultmann H."/>
            <person name="Hahne F."/>
            <person name="Blaszkiewicz S."/>
            <person name="Majety M."/>
            <person name="Zatloukal K."/>
            <person name="Fuzesi L."/>
            <person name="Poustka A."/>
            <person name="Wiemann S."/>
            <person name="Arlt D."/>
        </authorList>
    </citation>
    <scope>INTERACTION WITH VMP1</scope>
</reference>
<reference key="4">
    <citation type="journal article" date="2012" name="Nat. Commun.">
        <title>Imperfect interface of Beclin1 coiled-coil domain regulates homodimer and heterodimer formation with Atg14L and UVRAG.</title>
        <authorList>
            <person name="Li X."/>
            <person name="He L."/>
            <person name="Che K.H."/>
            <person name="Funderburk S.F."/>
            <person name="Pan L."/>
            <person name="Pan N."/>
            <person name="Zhang M."/>
            <person name="Yue Z."/>
            <person name="Zhao Y."/>
        </authorList>
    </citation>
    <scope>X-RAY CRYSTALLOGRAPHY (1.9 ANGSTROMS) OF 174-264</scope>
    <scope>SUBUNIT</scope>
    <scope>DOMAIN</scope>
    <scope>MUTAGENESIS OF LEU-178; GLU-189; LEU-192; LEU-196; ALA-217; GLU-224; ALA-255 AND LEU-259</scope>
</reference>
<comment type="function">
    <text evidence="1 2">Plays a central role in autophagy. Acts as a core subunit of the PI3K complex that mediates formation of phosphatidylinositol 3-phosphate; different complex forms are believed to play a role in multiple membrane trafficking pathways: PI3KC3-C1 is involved in initiation of autophagosomes and PI3KC3-C2 in maturation of autophagosomes and endocytosis. Involved in regulation of degradative endocytic trafficking and required for the abscission step in cytokinesis, probably in the context of PI3KC3-C2. Essential for the formation of PI3KC3-C2 but not PI3KC3-C1 PI3K complex forms. Involved in endocytosis. May play a role in antiviral host defense (By similarity).</text>
</comment>
<comment type="function">
    <text evidence="1 2">Beclin-1-C 35 kDa localized to mitochondria can promote apoptosis; it induces the mitochondrial translocation of BAX and the release of proapoptotic factors.</text>
</comment>
<comment type="subunit">
    <text evidence="1 2 5">A homodimeric form is proposed to exist; this metastable form readily transits to ATG14- or UVRAG-containing complexes with BECN1:UVRAG being more stable than BECN1:ATG14 (PubMed:22314358). Component of the PI3K (PI3KC3/PI3K-III/class III phosphatidylinositol 3-kinase) complex the core of which is composed of the catalytic subunit PIK3C3, the regulatory subunit PIK3R4 and BECN1 associating with additional regulatory/auxiliary subunits to form alternative complex forms. Alternative complex forms containing a fourth regulatory subunit in a mutually exclusive manner are PI3K complex I (PI3KC3-C1) containing ATG14, and PI3K complex II (PI3KC3-C2) containing UVRAG. PI3KC3-C1 displays a V-shaped architecture with PIK3R4 serving as a bridge between PIK3C3 and the ATG14:BECN1 subcomplex. Both, PI3KC3-C1 and PI3KC3-C2, can associate with further regulatory subunits, such as RUBCN, SH3GLB1/Bif-1 and AMBRA1. PI3KC3-C1 probably associates with PIK3CB. Forms a complex with PPP2CA and AMBRA1; AMBRA1 and BECN1 components of the complex regulate MYC stability via different pathways (By similarity). Component of the complex, at least composed of LRPPRC, BECN1 and BCL2; the interactions prevent BECN1 from forming an autophagy-inducing complex with PIK3C3 (By similarity). Interacts with AMBRA1, GOPC, GRID2. Interacts with BCL2 and BCL2L1 isoform Bcl-X(L); the interaction inhibits BECN1 function in promoting autophagy by interfering with the formation of the PI3K complex. Interacts with cytosolic HMGB1; inhibits the interaction of BECN1 and BCL2 leading to promotion of autophagy. Interacts with USP10, USP13, DAPK1, RAB39A. Interacts with SLAMF1 (By similarity). Interacts with the poly-Gln domain of ATXN3; the interaction causes deubiquitination at Lys-400 and stabilizes BECN1. Interacts with VMP1 (PubMed:17724469). Interacts with TRIM5; the interaction causes activation of BECN1 by causing its dissociation from its inhibitors BCL2 and TAB2 (By similarity). Interacts with active ULK1 (phosphorylated on 'Ser-317') and MEFV simultaneously (By similarity). Interacts with WDR81 and WDR91; negatively regulates the PI3 kinase/PI3K activity associated with endosomal membranes (By similarity). Interacts with LAPTM4B; competes with EGFR for LAPTM4B binding; regulates EGFR activity (By similarity). Interacts with TRIM50 (By similarity). Interacts with TRIM16 (By similarity). Interacts with ATG14; this interaction is increased in the absence of TMEM39A (By similarity). Interacts with WASHC1; preventing interaction with AMBRA1 and the DCX(AMBRA1) complex and subsequent ubiquitination (By similarity). Interacts with TRIM17 (By similarity). Interacts with BCL2L10/BCL-B (via BH1 domain) (By similarity). Interacts with SH3BGRL (By similarity). Interacts with IRGM; enhancing BECN1-interacting partners and influencing the composition of the BECN1 complex (By similarity). Interacts with ARMC3 (By similarity). Interacts with LRPPRC (By similarity).</text>
</comment>
<comment type="subcellular location">
    <subcellularLocation>
        <location evidence="1">Cytoplasm</location>
    </subcellularLocation>
    <subcellularLocation>
        <location evidence="2">Golgi apparatus</location>
        <location evidence="2">trans-Golgi network membrane</location>
        <topology evidence="2">Peripheral membrane protein</topology>
    </subcellularLocation>
    <subcellularLocation>
        <location evidence="2">Endosome membrane</location>
        <topology evidence="2">Peripheral membrane protein</topology>
    </subcellularLocation>
    <subcellularLocation>
        <location evidence="2">Endoplasmic reticulum membrane</location>
        <topology evidence="2">Peripheral membrane protein</topology>
    </subcellularLocation>
    <subcellularLocation>
        <location evidence="2">Mitochondrion membrane</location>
        <topology evidence="2">Peripheral membrane protein</topology>
    </subcellularLocation>
    <subcellularLocation>
        <location evidence="7">Cytoplasmic vesicle</location>
        <location evidence="7">Autophagosome</location>
    </subcellularLocation>
    <text evidence="1 2">Interaction with ATG14 promotes translocation to autophagosomes. Expressed in dendrites and cell bodies of cerebellar Purkinje cells.</text>
</comment>
<comment type="subcellular location">
    <molecule>Beclin-1-C 35 kDa</molecule>
    <subcellularLocation>
        <location evidence="1 2">Mitochondrion</location>
    </subcellularLocation>
    <subcellularLocation>
        <location evidence="2">Nucleus</location>
    </subcellularLocation>
    <subcellularLocation>
        <location evidence="2">Cytoplasm</location>
    </subcellularLocation>
</comment>
<comment type="subcellular location">
    <molecule>Beclin-1-C 37 kDa</molecule>
    <subcellularLocation>
        <location evidence="1">Mitochondrion</location>
    </subcellularLocation>
</comment>
<comment type="domain">
    <text evidence="2">The C-terminal evolutionary conserved domain (ECD) contains poly-Gln-binding domains such as the ATXN3 poly-Gln motif, consistent with structural docking models revealing two highly scored poly-Gln-binding pockets in the ECD (By similarity). As some binding is observed with BECN1 lacking the ECD, other domains of BECN1 may also interact with ATXN3 (By similarity).</text>
</comment>
<comment type="domain">
    <text evidence="6">The coiled coil domain can form antiparallel homodimers and mediates dimerization with the coiled coil domains of ATG14 or UVRAG involved in the formation of PI3K complexes.</text>
</comment>
<comment type="PTM">
    <text evidence="1 2">Phosphorylation at Thr-117 by DAPK1 reduces its interaction with BCL2 and BCL2L1 and promotes induction of autophagy. In response to autophagic stimuli, phosphorylated at serine residues by AMPK in an ATG14-dependent manner, and this phosphorylation is critical for maximally efficient autophagy.</text>
</comment>
<comment type="PTM">
    <text evidence="2">Polyubiquitinated by NEDD4, both with 'Lys-11'- and 'Lys-63'-linkages (By similarity). 'Lys-11'-linked polyubiquitination leads to degradation and is enhanced when the stabilizing interaction partner VPS34 is depleted (By similarity). Deubiquitinated by USP10 and USP13, leading to stabilize the PIK3C3/VPS34-containing complexes (By similarity). Polyubiquitinated at Lys-400 with 'Lys-48'-linkages (By similarity). 'Lys-48'-linked polyubiquitination of Lys-400 leads to degradation (By similarity). Deubiquitinated by ATXN3, leading to stabilization (By similarity). Ubiquitinated at Lys-435 via 'Lys-63'-linkage by the DCX(AMBRA1) complex, thereby increasing the association between BECN1 and PIK3C3 to promote PIK3C3 activity (By similarity). 'Lys-48'-linked ubiquitination by RNF216 leads to proteasomal degradation and autophagy inhibition (By similarity).</text>
</comment>
<comment type="PTM">
    <text evidence="1 2">Proteolytically processed by caspases including CASP8 and CASP3; the C-terminal fragments lack autophagy-inducing capacity and are proposed to induce apoptosis. Thus the cleavage is proposed to be an determinant to switch from autophagy to apoptosis pathways affecting cellular homeostasis including viral infections and survival of tumor cells.</text>
</comment>
<comment type="miscellaneous">
    <text evidence="2">Expanded poly-Gln tracts inhibit ATXN3-BECN1 interaction, decrease BECN1 levels and impair starvation-induced autophagy (By similarity).</text>
</comment>
<comment type="similarity">
    <text evidence="7">Belongs to the beclin family.</text>
</comment>
<evidence type="ECO:0000250" key="1">
    <source>
        <dbReference type="UniProtKB" id="O88597"/>
    </source>
</evidence>
<evidence type="ECO:0000250" key="2">
    <source>
        <dbReference type="UniProtKB" id="Q14457"/>
    </source>
</evidence>
<evidence type="ECO:0000255" key="3"/>
<evidence type="ECO:0000256" key="4">
    <source>
        <dbReference type="SAM" id="MobiDB-lite"/>
    </source>
</evidence>
<evidence type="ECO:0000269" key="5">
    <source>
    </source>
</evidence>
<evidence type="ECO:0000269" key="6">
    <source>
    </source>
</evidence>
<evidence type="ECO:0000305" key="7"/>
<evidence type="ECO:0007829" key="8">
    <source>
        <dbReference type="PDB" id="3Q8T"/>
    </source>
</evidence>